<reference key="1">
    <citation type="journal article" date="1999" name="Dev. Biol.">
        <title>The mouse SLIT family: secreted ligands for ROBO expressed in patterns that suggest a role in morphogenesis and axon guidance.</title>
        <authorList>
            <person name="Yuan W."/>
            <person name="Zhou L."/>
            <person name="Chen J.H."/>
            <person name="Wu J.Y."/>
            <person name="Rao Y."/>
            <person name="Ornitz D.M."/>
        </authorList>
    </citation>
    <scope>NUCLEOTIDE SEQUENCE [MRNA]</scope>
    <scope>DEVELOPMENTAL STAGE</scope>
    <source>
        <strain>ICR X Swiss Webster</strain>
    </source>
</reference>
<reference key="2">
    <citation type="journal article" date="2009" name="PLoS Biol.">
        <title>Lineage-specific biology revealed by a finished genome assembly of the mouse.</title>
        <authorList>
            <person name="Church D.M."/>
            <person name="Goodstadt L."/>
            <person name="Hillier L.W."/>
            <person name="Zody M.C."/>
            <person name="Goldstein S."/>
            <person name="She X."/>
            <person name="Bult C.J."/>
            <person name="Agarwala R."/>
            <person name="Cherry J.L."/>
            <person name="DiCuccio M."/>
            <person name="Hlavina W."/>
            <person name="Kapustin Y."/>
            <person name="Meric P."/>
            <person name="Maglott D."/>
            <person name="Birtle Z."/>
            <person name="Marques A.C."/>
            <person name="Graves T."/>
            <person name="Zhou S."/>
            <person name="Teague B."/>
            <person name="Potamousis K."/>
            <person name="Churas C."/>
            <person name="Place M."/>
            <person name="Herschleb J."/>
            <person name="Runnheim R."/>
            <person name="Forrest D."/>
            <person name="Amos-Landgraf J."/>
            <person name="Schwartz D.C."/>
            <person name="Cheng Z."/>
            <person name="Lindblad-Toh K."/>
            <person name="Eichler E.E."/>
            <person name="Ponting C.P."/>
        </authorList>
    </citation>
    <scope>NUCLEOTIDE SEQUENCE [LARGE SCALE GENOMIC DNA]</scope>
    <source>
        <strain>C57BL/6J</strain>
    </source>
</reference>
<accession>Q9WVB4</accession>
<accession>B1ATW4</accession>
<evidence type="ECO:0000250" key="1"/>
<evidence type="ECO:0000255" key="2"/>
<evidence type="ECO:0000255" key="3">
    <source>
        <dbReference type="PROSITE-ProRule" id="PRU00039"/>
    </source>
</evidence>
<evidence type="ECO:0000255" key="4">
    <source>
        <dbReference type="PROSITE-ProRule" id="PRU00076"/>
    </source>
</evidence>
<evidence type="ECO:0000255" key="5">
    <source>
        <dbReference type="PROSITE-ProRule" id="PRU00122"/>
    </source>
</evidence>
<evidence type="ECO:0000269" key="6">
    <source>
    </source>
</evidence>
<evidence type="ECO:0000305" key="7"/>
<protein>
    <recommendedName>
        <fullName>Slit homolog 3 protein</fullName>
        <shortName>Slit-3</shortName>
        <shortName>Slit3</shortName>
    </recommendedName>
</protein>
<comment type="function">
    <text>May act as molecular guidance cue in cellular migration, and function may be mediated by interaction with roundabout homolog receptors.</text>
</comment>
<comment type="subcellular location">
    <subcellularLocation>
        <location evidence="1">Secreted</location>
    </subcellularLocation>
</comment>
<comment type="developmental stage">
    <text evidence="6">Detected as early as 8.25 dpc in the ventral neural tube. From 9.5 dpc to 11.5 dpc is expressed in the floor plate and motor columns. This pattern of expression continued until at least 17.5 dpc and remained weak. Rostrally, at 8.25 dpc is expressed in the ventral midline of the neural groove and in the neural fold prior to closure of the neural tube. Between 8.5 dpc and 9.5 dpc, expression is observed in the ventral side of the mesencephalon and metencephalon and in the commissural plate after closure of the neural tube. After 13.5 dpc, the expression of SLIT3 is weak in the developing CNS. At 9.5 dpc, SLIT3 is detected in the otic vesicle and in the clefts between the first and the second branchial arches. Between 10.5 dpc and 11.5 dpc is prominently expressed in the otic vesicle but decreased in the branchial clefts. From 13.5 dpc to 17.5 dpc, expression is observed in the cochlea, in the pigment layer of the retina, and in the olfactory epithelium. At 13.5 dpc expression is observed in the whisker follicle surrounding the bulb and shaft. In the developing limb is first detected at 10.5 dpc in distal limb bud mesenchyme. At this stage, is also observed in lateral ridge tissue flanking the limb bud. This pattern persisted through 11.5 dpc but unlike with SLIT2, expression is not observed in the inter-limb bud lateral ridge tissue. At 11.5 dpc, expression in both the fore- and the hindlimb is most intense in the distal anterior mesenchyme and in the proximal posterior cleft between the limb bud and the lateral ridge. At 13.5 dpc could be detected in the wrist and weakly in palm and proximal part of the digits excluding the tips of the digits.</text>
</comment>
<name>SLIT3_MOUSE</name>
<proteinExistence type="evidence at transcript level"/>
<dbReference type="EMBL" id="AF144629">
    <property type="protein sequence ID" value="AAD44760.1"/>
    <property type="molecule type" value="mRNA"/>
</dbReference>
<dbReference type="EMBL" id="AL669839">
    <property type="status" value="NOT_ANNOTATED_CDS"/>
    <property type="molecule type" value="Genomic_DNA"/>
</dbReference>
<dbReference type="EMBL" id="AL669856">
    <property type="status" value="NOT_ANNOTATED_CDS"/>
    <property type="molecule type" value="Genomic_DNA"/>
</dbReference>
<dbReference type="EMBL" id="AL731688">
    <property type="status" value="NOT_ANNOTATED_CDS"/>
    <property type="molecule type" value="Genomic_DNA"/>
</dbReference>
<dbReference type="EMBL" id="AL732401">
    <property type="status" value="NOT_ANNOTATED_CDS"/>
    <property type="molecule type" value="Genomic_DNA"/>
</dbReference>
<dbReference type="EMBL" id="AL732630">
    <property type="status" value="NOT_ANNOTATED_CDS"/>
    <property type="molecule type" value="Genomic_DNA"/>
</dbReference>
<dbReference type="CCDS" id="CCDS24542.1"/>
<dbReference type="RefSeq" id="NP_035542.2">
    <property type="nucleotide sequence ID" value="NM_011412.3"/>
</dbReference>
<dbReference type="SMR" id="Q9WVB4"/>
<dbReference type="BioGRID" id="203329">
    <property type="interactions" value="4"/>
</dbReference>
<dbReference type="FunCoup" id="Q9WVB4">
    <property type="interactions" value="310"/>
</dbReference>
<dbReference type="STRING" id="10090.ENSMUSP00000066857"/>
<dbReference type="GlyConnect" id="2717">
    <property type="glycosylation" value="1 N-Linked glycan (3 sites)"/>
</dbReference>
<dbReference type="GlyCosmos" id="Q9WVB4">
    <property type="glycosylation" value="12 sites, 1 glycan"/>
</dbReference>
<dbReference type="GlyGen" id="Q9WVB4">
    <property type="glycosylation" value="13 sites, 7 N-linked glycans (7 sites), 1 O-linked glycan (1 site)"/>
</dbReference>
<dbReference type="iPTMnet" id="Q9WVB4"/>
<dbReference type="PhosphoSitePlus" id="Q9WVB4"/>
<dbReference type="jPOST" id="Q9WVB4"/>
<dbReference type="PaxDb" id="10090-ENSMUSP00000066857"/>
<dbReference type="ProteomicsDB" id="261421"/>
<dbReference type="Pumba" id="Q9WVB4"/>
<dbReference type="Antibodypedia" id="16807">
    <property type="antibodies" value="237 antibodies from 31 providers"/>
</dbReference>
<dbReference type="Ensembl" id="ENSMUST00000069837.4">
    <property type="protein sequence ID" value="ENSMUSP00000066857.4"/>
    <property type="gene ID" value="ENSMUSG00000056427.11"/>
</dbReference>
<dbReference type="GeneID" id="20564"/>
<dbReference type="KEGG" id="mmu:20564"/>
<dbReference type="UCSC" id="uc007ild.2">
    <property type="organism name" value="mouse"/>
</dbReference>
<dbReference type="AGR" id="MGI:1315202"/>
<dbReference type="CTD" id="6586"/>
<dbReference type="MGI" id="MGI:1315202">
    <property type="gene designation" value="Slit3"/>
</dbReference>
<dbReference type="VEuPathDB" id="HostDB:ENSMUSG00000056427"/>
<dbReference type="eggNOG" id="KOG4237">
    <property type="taxonomic scope" value="Eukaryota"/>
</dbReference>
<dbReference type="GeneTree" id="ENSGT00940000159322"/>
<dbReference type="HOGENOM" id="CLU_001431_2_0_1"/>
<dbReference type="InParanoid" id="Q9WVB4"/>
<dbReference type="OMA" id="CIVVHQE"/>
<dbReference type="OrthoDB" id="283575at2759"/>
<dbReference type="PhylomeDB" id="Q9WVB4"/>
<dbReference type="TreeFam" id="TF332887"/>
<dbReference type="Reactome" id="R-MMU-376176">
    <property type="pathway name" value="Signaling by ROBO receptors"/>
</dbReference>
<dbReference type="BioGRID-ORCS" id="20564">
    <property type="hits" value="0 hits in 77 CRISPR screens"/>
</dbReference>
<dbReference type="ChiTaRS" id="Slit3">
    <property type="organism name" value="mouse"/>
</dbReference>
<dbReference type="PRO" id="PR:Q9WVB4"/>
<dbReference type="Proteomes" id="UP000000589">
    <property type="component" value="Chromosome 11"/>
</dbReference>
<dbReference type="RNAct" id="Q9WVB4">
    <property type="molecule type" value="protein"/>
</dbReference>
<dbReference type="Bgee" id="ENSMUSG00000056427">
    <property type="expression patterns" value="Expressed in dorsal pancreas and 206 other cell types or tissues"/>
</dbReference>
<dbReference type="GO" id="GO:0005615">
    <property type="term" value="C:extracellular space"/>
    <property type="evidence" value="ECO:0000314"/>
    <property type="project" value="MGI"/>
</dbReference>
<dbReference type="GO" id="GO:0005886">
    <property type="term" value="C:plasma membrane"/>
    <property type="evidence" value="ECO:0000304"/>
    <property type="project" value="Reactome"/>
</dbReference>
<dbReference type="GO" id="GO:0005509">
    <property type="term" value="F:calcium ion binding"/>
    <property type="evidence" value="ECO:0007669"/>
    <property type="project" value="InterPro"/>
</dbReference>
<dbReference type="GO" id="GO:0048495">
    <property type="term" value="F:Roundabout binding"/>
    <property type="evidence" value="ECO:0007669"/>
    <property type="project" value="Ensembl"/>
</dbReference>
<dbReference type="GO" id="GO:0005102">
    <property type="term" value="F:signaling receptor binding"/>
    <property type="evidence" value="ECO:0000304"/>
    <property type="project" value="MGI"/>
</dbReference>
<dbReference type="GO" id="GO:0009887">
    <property type="term" value="P:animal organ morphogenesis"/>
    <property type="evidence" value="ECO:0000315"/>
    <property type="project" value="MGI"/>
</dbReference>
<dbReference type="GO" id="GO:0003180">
    <property type="term" value="P:aortic valve morphogenesis"/>
    <property type="evidence" value="ECO:0000315"/>
    <property type="project" value="BHF-UCL"/>
</dbReference>
<dbReference type="GO" id="GO:0061364">
    <property type="term" value="P:apoptotic process involved in luteolysis"/>
    <property type="evidence" value="ECO:0007669"/>
    <property type="project" value="Ensembl"/>
</dbReference>
<dbReference type="GO" id="GO:0003181">
    <property type="term" value="P:atrioventricular valve morphogenesis"/>
    <property type="evidence" value="ECO:0000315"/>
    <property type="project" value="BHF-UCL"/>
</dbReference>
<dbReference type="GO" id="GO:0048846">
    <property type="term" value="P:axon extension involved in axon guidance"/>
    <property type="evidence" value="ECO:0007669"/>
    <property type="project" value="Ensembl"/>
</dbReference>
<dbReference type="GO" id="GO:0007411">
    <property type="term" value="P:axon guidance"/>
    <property type="evidence" value="ECO:0000314"/>
    <property type="project" value="MGI"/>
</dbReference>
<dbReference type="GO" id="GO:0032870">
    <property type="term" value="P:cellular response to hormone stimulus"/>
    <property type="evidence" value="ECO:0007669"/>
    <property type="project" value="Ensembl"/>
</dbReference>
<dbReference type="GO" id="GO:0050919">
    <property type="term" value="P:negative chemotaxis"/>
    <property type="evidence" value="ECO:0007669"/>
    <property type="project" value="Ensembl"/>
</dbReference>
<dbReference type="GO" id="GO:0030308">
    <property type="term" value="P:negative regulation of cell growth"/>
    <property type="evidence" value="ECO:0007669"/>
    <property type="project" value="Ensembl"/>
</dbReference>
<dbReference type="GO" id="GO:0008285">
    <property type="term" value="P:negative regulation of cell population proliferation"/>
    <property type="evidence" value="ECO:0000316"/>
    <property type="project" value="MGI"/>
</dbReference>
<dbReference type="GO" id="GO:0070100">
    <property type="term" value="P:negative regulation of chemokine-mediated signaling pathway"/>
    <property type="evidence" value="ECO:0007669"/>
    <property type="project" value="Ensembl"/>
</dbReference>
<dbReference type="GO" id="GO:0010629">
    <property type="term" value="P:negative regulation of gene expression"/>
    <property type="evidence" value="ECO:0000316"/>
    <property type="project" value="MGI"/>
</dbReference>
<dbReference type="GO" id="GO:0051414">
    <property type="term" value="P:response to cortisol"/>
    <property type="evidence" value="ECO:0007669"/>
    <property type="project" value="Ensembl"/>
</dbReference>
<dbReference type="GO" id="GO:0035385">
    <property type="term" value="P:Roundabout signaling pathway"/>
    <property type="evidence" value="ECO:0007669"/>
    <property type="project" value="Ensembl"/>
</dbReference>
<dbReference type="GO" id="GO:0060412">
    <property type="term" value="P:ventricular septum morphogenesis"/>
    <property type="evidence" value="ECO:0000315"/>
    <property type="project" value="BHF-UCL"/>
</dbReference>
<dbReference type="CDD" id="cd00054">
    <property type="entry name" value="EGF_CA"/>
    <property type="match status" value="5"/>
</dbReference>
<dbReference type="CDD" id="cd00110">
    <property type="entry name" value="LamG"/>
    <property type="match status" value="1"/>
</dbReference>
<dbReference type="FunFam" id="2.10.25.10:FF:000045">
    <property type="entry name" value="Slit guidance ligand 2"/>
    <property type="match status" value="1"/>
</dbReference>
<dbReference type="FunFam" id="2.10.25.10:FF:000053">
    <property type="entry name" value="Slit guidance ligand 2"/>
    <property type="match status" value="1"/>
</dbReference>
<dbReference type="FunFam" id="2.10.25.10:FF:000054">
    <property type="entry name" value="Slit guidance ligand 2"/>
    <property type="match status" value="1"/>
</dbReference>
<dbReference type="FunFam" id="2.10.25.10:FF:000062">
    <property type="entry name" value="Slit guidance ligand 2"/>
    <property type="match status" value="1"/>
</dbReference>
<dbReference type="FunFam" id="2.10.25.10:FF:000063">
    <property type="entry name" value="Slit guidance ligand 2"/>
    <property type="match status" value="1"/>
</dbReference>
<dbReference type="FunFam" id="2.10.25.10:FF:000099">
    <property type="entry name" value="Slit guidance ligand 2"/>
    <property type="match status" value="1"/>
</dbReference>
<dbReference type="FunFam" id="3.80.10.10:FF:000002">
    <property type="entry name" value="Slit guidance ligand 2"/>
    <property type="match status" value="2"/>
</dbReference>
<dbReference type="FunFam" id="3.80.10.10:FF:000004">
    <property type="entry name" value="Slit guidance ligand 2"/>
    <property type="match status" value="1"/>
</dbReference>
<dbReference type="FunFam" id="3.80.10.10:FF:000376">
    <property type="entry name" value="Slit guidance ligand 2"/>
    <property type="match status" value="1"/>
</dbReference>
<dbReference type="FunFam" id="2.10.25.10:FF:000375">
    <property type="entry name" value="Slit guidance ligand 3"/>
    <property type="match status" value="1"/>
</dbReference>
<dbReference type="FunFam" id="2.60.120.200:FF:000047">
    <property type="entry name" value="Slit guidance ligand 3"/>
    <property type="match status" value="1"/>
</dbReference>
<dbReference type="FunFam" id="3.80.10.10:FF:000032">
    <property type="entry name" value="Slit homolog 2 (Drosophila)"/>
    <property type="match status" value="1"/>
</dbReference>
<dbReference type="Gene3D" id="2.60.120.200">
    <property type="match status" value="1"/>
</dbReference>
<dbReference type="Gene3D" id="2.10.25.10">
    <property type="entry name" value="Laminin"/>
    <property type="match status" value="8"/>
</dbReference>
<dbReference type="Gene3D" id="3.80.10.10">
    <property type="entry name" value="Ribonuclease Inhibitor"/>
    <property type="match status" value="5"/>
</dbReference>
<dbReference type="InterPro" id="IPR013320">
    <property type="entry name" value="ConA-like_dom_sf"/>
</dbReference>
<dbReference type="InterPro" id="IPR000483">
    <property type="entry name" value="Cys-rich_flank_reg_C"/>
</dbReference>
<dbReference type="InterPro" id="IPR006207">
    <property type="entry name" value="Cys_knot_C"/>
</dbReference>
<dbReference type="InterPro" id="IPR001881">
    <property type="entry name" value="EGF-like_Ca-bd_dom"/>
</dbReference>
<dbReference type="InterPro" id="IPR013032">
    <property type="entry name" value="EGF-like_CS"/>
</dbReference>
<dbReference type="InterPro" id="IPR000742">
    <property type="entry name" value="EGF-like_dom"/>
</dbReference>
<dbReference type="InterPro" id="IPR000152">
    <property type="entry name" value="EGF-type_Asp/Asn_hydroxyl_site"/>
</dbReference>
<dbReference type="InterPro" id="IPR018097">
    <property type="entry name" value="EGF_Ca-bd_CS"/>
</dbReference>
<dbReference type="InterPro" id="IPR009030">
    <property type="entry name" value="Growth_fac_rcpt_cys_sf"/>
</dbReference>
<dbReference type="InterPro" id="IPR001791">
    <property type="entry name" value="Laminin_G"/>
</dbReference>
<dbReference type="InterPro" id="IPR001611">
    <property type="entry name" value="Leu-rich_rpt"/>
</dbReference>
<dbReference type="InterPro" id="IPR003591">
    <property type="entry name" value="Leu-rich_rpt_typical-subtyp"/>
</dbReference>
<dbReference type="InterPro" id="IPR032675">
    <property type="entry name" value="LRR_dom_sf"/>
</dbReference>
<dbReference type="InterPro" id="IPR000372">
    <property type="entry name" value="LRRNT"/>
</dbReference>
<dbReference type="InterPro" id="IPR051355">
    <property type="entry name" value="Notch/Slit_guidance"/>
</dbReference>
<dbReference type="PANTHER" id="PTHR45836:SF4">
    <property type="entry name" value="PROTEIN SLIT"/>
    <property type="match status" value="1"/>
</dbReference>
<dbReference type="PANTHER" id="PTHR45836">
    <property type="entry name" value="SLIT HOMOLOG"/>
    <property type="match status" value="1"/>
</dbReference>
<dbReference type="Pfam" id="PF00008">
    <property type="entry name" value="EGF"/>
    <property type="match status" value="5"/>
</dbReference>
<dbReference type="Pfam" id="PF12661">
    <property type="entry name" value="hEGF"/>
    <property type="match status" value="1"/>
</dbReference>
<dbReference type="Pfam" id="PF02210">
    <property type="entry name" value="Laminin_G_2"/>
    <property type="match status" value="1"/>
</dbReference>
<dbReference type="Pfam" id="PF13855">
    <property type="entry name" value="LRR_8"/>
    <property type="match status" value="5"/>
</dbReference>
<dbReference type="Pfam" id="PF01463">
    <property type="entry name" value="LRRCT"/>
    <property type="match status" value="4"/>
</dbReference>
<dbReference type="Pfam" id="PF01462">
    <property type="entry name" value="LRRNT"/>
    <property type="match status" value="3"/>
</dbReference>
<dbReference type="SMART" id="SM00041">
    <property type="entry name" value="CT"/>
    <property type="match status" value="1"/>
</dbReference>
<dbReference type="SMART" id="SM00181">
    <property type="entry name" value="EGF"/>
    <property type="match status" value="9"/>
</dbReference>
<dbReference type="SMART" id="SM00179">
    <property type="entry name" value="EGF_CA"/>
    <property type="match status" value="9"/>
</dbReference>
<dbReference type="SMART" id="SM00282">
    <property type="entry name" value="LamG"/>
    <property type="match status" value="1"/>
</dbReference>
<dbReference type="SMART" id="SM00364">
    <property type="entry name" value="LRR_BAC"/>
    <property type="match status" value="6"/>
</dbReference>
<dbReference type="SMART" id="SM00368">
    <property type="entry name" value="LRR_RI"/>
    <property type="match status" value="4"/>
</dbReference>
<dbReference type="SMART" id="SM00365">
    <property type="entry name" value="LRR_SD22"/>
    <property type="match status" value="9"/>
</dbReference>
<dbReference type="SMART" id="SM00369">
    <property type="entry name" value="LRR_TYP"/>
    <property type="match status" value="18"/>
</dbReference>
<dbReference type="SMART" id="SM00082">
    <property type="entry name" value="LRRCT"/>
    <property type="match status" value="4"/>
</dbReference>
<dbReference type="SMART" id="SM00013">
    <property type="entry name" value="LRRNT"/>
    <property type="match status" value="4"/>
</dbReference>
<dbReference type="SUPFAM" id="SSF49899">
    <property type="entry name" value="Concanavalin A-like lectins/glucanases"/>
    <property type="match status" value="1"/>
</dbReference>
<dbReference type="SUPFAM" id="SSF57196">
    <property type="entry name" value="EGF/Laminin"/>
    <property type="match status" value="4"/>
</dbReference>
<dbReference type="SUPFAM" id="SSF57184">
    <property type="entry name" value="Growth factor receptor domain"/>
    <property type="match status" value="1"/>
</dbReference>
<dbReference type="SUPFAM" id="SSF52058">
    <property type="entry name" value="L domain-like"/>
    <property type="match status" value="2"/>
</dbReference>
<dbReference type="PROSITE" id="PS01185">
    <property type="entry name" value="CTCK_1"/>
    <property type="match status" value="1"/>
</dbReference>
<dbReference type="PROSITE" id="PS01225">
    <property type="entry name" value="CTCK_2"/>
    <property type="match status" value="1"/>
</dbReference>
<dbReference type="PROSITE" id="PS00022">
    <property type="entry name" value="EGF_1"/>
    <property type="match status" value="9"/>
</dbReference>
<dbReference type="PROSITE" id="PS01186">
    <property type="entry name" value="EGF_2"/>
    <property type="match status" value="7"/>
</dbReference>
<dbReference type="PROSITE" id="PS50026">
    <property type="entry name" value="EGF_3"/>
    <property type="match status" value="9"/>
</dbReference>
<dbReference type="PROSITE" id="PS01187">
    <property type="entry name" value="EGF_CA"/>
    <property type="match status" value="2"/>
</dbReference>
<dbReference type="PROSITE" id="PS50025">
    <property type="entry name" value="LAM_G_DOMAIN"/>
    <property type="match status" value="1"/>
</dbReference>
<dbReference type="PROSITE" id="PS51450">
    <property type="entry name" value="LRR"/>
    <property type="match status" value="20"/>
</dbReference>
<keyword id="KW-0217">Developmental protein</keyword>
<keyword id="KW-0221">Differentiation</keyword>
<keyword id="KW-1015">Disulfide bond</keyword>
<keyword id="KW-0245">EGF-like domain</keyword>
<keyword id="KW-0325">Glycoprotein</keyword>
<keyword id="KW-0433">Leucine-rich repeat</keyword>
<keyword id="KW-0524">Neurogenesis</keyword>
<keyword id="KW-1185">Reference proteome</keyword>
<keyword id="KW-0677">Repeat</keyword>
<keyword id="KW-0964">Secreted</keyword>
<keyword id="KW-0732">Signal</keyword>
<feature type="signal peptide" evidence="2">
    <location>
        <begin position="1"/>
        <end position="33"/>
    </location>
</feature>
<feature type="chain" id="PRO_0000007733" description="Slit homolog 3 protein">
    <location>
        <begin position="34"/>
        <end position="1523"/>
    </location>
</feature>
<feature type="domain" description="LRRNT">
    <location>
        <begin position="34"/>
        <end position="61"/>
    </location>
</feature>
<feature type="repeat" description="LRR 1">
    <location>
        <begin position="62"/>
        <end position="83"/>
    </location>
</feature>
<feature type="repeat" description="LRR 2">
    <location>
        <begin position="86"/>
        <end position="107"/>
    </location>
</feature>
<feature type="repeat" description="LRR 3">
    <location>
        <begin position="110"/>
        <end position="131"/>
    </location>
</feature>
<feature type="repeat" description="LRR 4">
    <location>
        <begin position="134"/>
        <end position="155"/>
    </location>
</feature>
<feature type="repeat" description="LRR 5">
    <location>
        <begin position="158"/>
        <end position="179"/>
    </location>
</feature>
<feature type="repeat" description="LRR 6">
    <location>
        <begin position="182"/>
        <end position="203"/>
    </location>
</feature>
<feature type="domain" description="LRRCT 1">
    <location>
        <begin position="215"/>
        <end position="265"/>
    </location>
</feature>
<feature type="domain" description="LRRNT 2">
    <location>
        <begin position="271"/>
        <end position="307"/>
    </location>
</feature>
<feature type="repeat" description="LRR 7">
    <location>
        <begin position="308"/>
        <end position="329"/>
    </location>
</feature>
<feature type="repeat" description="LRR 8">
    <location>
        <begin position="332"/>
        <end position="353"/>
    </location>
</feature>
<feature type="repeat" description="LRR 9">
    <location>
        <begin position="356"/>
        <end position="377"/>
    </location>
</feature>
<feature type="repeat" description="LRR 10">
    <location>
        <begin position="380"/>
        <end position="401"/>
    </location>
</feature>
<feature type="repeat" description="LRR 11">
    <location>
        <begin position="404"/>
        <end position="425"/>
    </location>
</feature>
<feature type="domain" description="LRRCT 2">
    <location>
        <begin position="437"/>
        <end position="487"/>
    </location>
</feature>
<feature type="domain" description="LRRNT 3">
    <location>
        <begin position="496"/>
        <end position="532"/>
    </location>
</feature>
<feature type="repeat" description="LRR 12">
    <location>
        <begin position="533"/>
        <end position="554"/>
    </location>
</feature>
<feature type="repeat" description="LRR 13">
    <location>
        <begin position="558"/>
        <end position="579"/>
    </location>
</feature>
<feature type="repeat" description="LRR 14">
    <location>
        <begin position="582"/>
        <end position="603"/>
    </location>
</feature>
<feature type="repeat" description="LRR 15">
    <location>
        <begin position="606"/>
        <end position="627"/>
    </location>
</feature>
<feature type="repeat" description="LRR 16">
    <location>
        <begin position="630"/>
        <end position="651"/>
    </location>
</feature>
<feature type="domain" description="LRRCT 3">
    <location>
        <begin position="663"/>
        <end position="713"/>
    </location>
</feature>
<feature type="domain" description="LRRNT 4">
    <location>
        <begin position="716"/>
        <end position="752"/>
    </location>
</feature>
<feature type="repeat" description="LRR 17">
    <location>
        <begin position="753"/>
        <end position="774"/>
    </location>
</feature>
<feature type="repeat" description="LRR 18">
    <location>
        <begin position="776"/>
        <end position="797"/>
    </location>
</feature>
<feature type="repeat" description="LRR 19">
    <location>
        <begin position="800"/>
        <end position="821"/>
    </location>
</feature>
<feature type="repeat" description="LRR 20">
    <location>
        <begin position="824"/>
        <end position="845"/>
    </location>
</feature>
<feature type="domain" description="LRRCT 4">
    <location>
        <begin position="857"/>
        <end position="907"/>
    </location>
</feature>
<feature type="domain" description="EGF-like 1" evidence="4">
    <location>
        <begin position="918"/>
        <end position="953"/>
    </location>
</feature>
<feature type="domain" description="EGF-like 2" evidence="4">
    <location>
        <begin position="955"/>
        <end position="994"/>
    </location>
</feature>
<feature type="domain" description="EGF-like 3" evidence="4">
    <location>
        <begin position="996"/>
        <end position="1032"/>
    </location>
</feature>
<feature type="domain" description="EGF-like 4" evidence="4">
    <location>
        <begin position="1034"/>
        <end position="1072"/>
    </location>
</feature>
<feature type="domain" description="EGF-like 5" evidence="4">
    <location>
        <begin position="1074"/>
        <end position="1110"/>
    </location>
</feature>
<feature type="domain" description="EGF-like 6" evidence="4">
    <location>
        <begin position="1119"/>
        <end position="1155"/>
    </location>
</feature>
<feature type="domain" description="Laminin G-like" evidence="5">
    <location>
        <begin position="1158"/>
        <end position="1332"/>
    </location>
</feature>
<feature type="domain" description="EGF-like 7" evidence="4">
    <location>
        <begin position="1340"/>
        <end position="1365"/>
    </location>
</feature>
<feature type="domain" description="EGF-like 8" evidence="4">
    <location>
        <begin position="1368"/>
        <end position="1403"/>
    </location>
</feature>
<feature type="domain" description="EGF-like 9" evidence="4">
    <location>
        <begin position="1408"/>
        <end position="1444"/>
    </location>
</feature>
<feature type="domain" description="CTCK" evidence="3">
    <location>
        <begin position="1449"/>
        <end position="1523"/>
    </location>
</feature>
<feature type="glycosylation site" description="N-linked (GlcNAc...) asparagine" evidence="2">
    <location>
        <position position="72"/>
    </location>
</feature>
<feature type="glycosylation site" description="N-linked (GlcNAc...) asparagine" evidence="2">
    <location>
        <position position="192"/>
    </location>
</feature>
<feature type="glycosylation site" description="N-linked (GlcNAc...) asparagine" evidence="2">
    <location>
        <position position="563"/>
    </location>
</feature>
<feature type="glycosylation site" description="N-linked (GlcNAc...) asparagine" evidence="2">
    <location>
        <position position="622"/>
    </location>
</feature>
<feature type="glycosylation site" description="N-linked (GlcNAc...) asparagine" evidence="2">
    <location>
        <position position="784"/>
    </location>
</feature>
<feature type="glycosylation site" description="N-linked (GlcNAc...) asparagine" evidence="2">
    <location>
        <position position="792"/>
    </location>
</feature>
<feature type="glycosylation site" description="N-linked (GlcNAc...) asparagine" evidence="2">
    <location>
        <position position="797"/>
    </location>
</feature>
<feature type="glycosylation site" description="N-linked (GlcNAc...) asparagine" evidence="2">
    <location>
        <position position="928"/>
    </location>
</feature>
<feature type="glycosylation site" description="N-linked (GlcNAc...) asparagine" evidence="2">
    <location>
        <position position="1025"/>
    </location>
</feature>
<feature type="glycosylation site" description="N-linked (GlcNAc...) asparagine" evidence="2">
    <location>
        <position position="1181"/>
    </location>
</feature>
<feature type="glycosylation site" description="N-linked (GlcNAc...) asparagine" evidence="2">
    <location>
        <position position="1247"/>
    </location>
</feature>
<feature type="glycosylation site" description="N-linked (GlcNAc...) asparagine" evidence="2">
    <location>
        <position position="1406"/>
    </location>
</feature>
<feature type="disulfide bond" evidence="1">
    <location>
        <begin position="284"/>
        <end position="293"/>
    </location>
</feature>
<feature type="disulfide bond" evidence="1">
    <location>
        <begin position="441"/>
        <end position="464"/>
    </location>
</feature>
<feature type="disulfide bond" evidence="1">
    <location>
        <begin position="443"/>
        <end position="485"/>
    </location>
</feature>
<feature type="disulfide bond" evidence="1">
    <location>
        <begin position="505"/>
        <end position="511"/>
    </location>
</feature>
<feature type="disulfide bond" evidence="1">
    <location>
        <begin position="509"/>
        <end position="518"/>
    </location>
</feature>
<feature type="disulfide bond" evidence="1">
    <location>
        <begin position="667"/>
        <end position="690"/>
    </location>
</feature>
<feature type="disulfide bond" evidence="1">
    <location>
        <begin position="669"/>
        <end position="711"/>
    </location>
</feature>
<feature type="disulfide bond" evidence="1">
    <location>
        <begin position="920"/>
        <end position="931"/>
    </location>
</feature>
<feature type="disulfide bond" evidence="1">
    <location>
        <begin position="925"/>
        <end position="941"/>
    </location>
</feature>
<feature type="disulfide bond" evidence="1">
    <location>
        <begin position="943"/>
        <end position="952"/>
    </location>
</feature>
<feature type="disulfide bond" evidence="1">
    <location>
        <begin position="959"/>
        <end position="970"/>
    </location>
</feature>
<feature type="disulfide bond" evidence="1">
    <location>
        <begin position="964"/>
        <end position="982"/>
    </location>
</feature>
<feature type="disulfide bond" evidence="1">
    <location>
        <begin position="984"/>
        <end position="993"/>
    </location>
</feature>
<feature type="disulfide bond" evidence="1">
    <location>
        <begin position="1000"/>
        <end position="1011"/>
    </location>
</feature>
<feature type="disulfide bond" evidence="1">
    <location>
        <begin position="1005"/>
        <end position="1020"/>
    </location>
</feature>
<feature type="disulfide bond" evidence="1">
    <location>
        <begin position="1022"/>
        <end position="1031"/>
    </location>
</feature>
<feature type="disulfide bond" evidence="1">
    <location>
        <begin position="1038"/>
        <end position="1051"/>
    </location>
</feature>
<feature type="disulfide bond" evidence="1">
    <location>
        <begin position="1045"/>
        <end position="1060"/>
    </location>
</feature>
<feature type="disulfide bond" evidence="1">
    <location>
        <begin position="1062"/>
        <end position="1071"/>
    </location>
</feature>
<feature type="disulfide bond" evidence="1">
    <location>
        <begin position="1078"/>
        <end position="1089"/>
    </location>
</feature>
<feature type="disulfide bond" evidence="1">
    <location>
        <begin position="1083"/>
        <end position="1098"/>
    </location>
</feature>
<feature type="disulfide bond" evidence="1">
    <location>
        <begin position="1100"/>
        <end position="1109"/>
    </location>
</feature>
<feature type="disulfide bond" evidence="1">
    <location>
        <begin position="1123"/>
        <end position="1134"/>
    </location>
</feature>
<feature type="disulfide bond" evidence="1">
    <location>
        <begin position="1128"/>
        <end position="1143"/>
    </location>
</feature>
<feature type="disulfide bond" evidence="1">
    <location>
        <begin position="1145"/>
        <end position="1154"/>
    </location>
</feature>
<feature type="disulfide bond" evidence="1">
    <location>
        <begin position="1305"/>
        <end position="1332"/>
    </location>
</feature>
<feature type="disulfide bond" evidence="1">
    <location>
        <begin position="1355"/>
        <end position="1364"/>
    </location>
</feature>
<feature type="disulfide bond" evidence="1">
    <location>
        <begin position="1372"/>
        <end position="1382"/>
    </location>
</feature>
<feature type="disulfide bond" evidence="1">
    <location>
        <begin position="1377"/>
        <end position="1391"/>
    </location>
</feature>
<feature type="disulfide bond" evidence="1">
    <location>
        <begin position="1393"/>
        <end position="1402"/>
    </location>
</feature>
<feature type="disulfide bond" evidence="1">
    <location>
        <begin position="1412"/>
        <end position="1422"/>
    </location>
</feature>
<feature type="disulfide bond" evidence="1">
    <location>
        <begin position="1417"/>
        <end position="1432"/>
    </location>
</feature>
<feature type="disulfide bond" evidence="1">
    <location>
        <begin position="1434"/>
        <end position="1443"/>
    </location>
</feature>
<feature type="disulfide bond" evidence="1">
    <location>
        <begin position="1449"/>
        <end position="1487"/>
    </location>
</feature>
<feature type="disulfide bond" evidence="1">
    <location>
        <begin position="1467"/>
        <end position="1501"/>
    </location>
</feature>
<feature type="disulfide bond" evidence="1">
    <location>
        <begin position="1478"/>
        <end position="1517"/>
    </location>
</feature>
<feature type="disulfide bond" evidence="1">
    <location>
        <begin position="1482"/>
        <end position="1519"/>
    </location>
</feature>
<feature type="sequence conflict" description="In Ref. 1; AAD44760." evidence="7" ref="1">
    <original>G</original>
    <variation>S</variation>
    <location>
        <position position="582"/>
    </location>
</feature>
<feature type="sequence conflict" description="In Ref. 1; AAD44760." evidence="7" ref="1">
    <original>S</original>
    <variation>G</variation>
    <location>
        <position position="606"/>
    </location>
</feature>
<feature type="sequence conflict" description="In Ref. 1; AAD44760." evidence="7" ref="1">
    <original>C</original>
    <variation>F</variation>
    <location>
        <position position="729"/>
    </location>
</feature>
<feature type="sequence conflict" description="In Ref. 1; AAD44760." evidence="7" ref="1">
    <original>D</original>
    <variation>G</variation>
    <location>
        <position position="999"/>
    </location>
</feature>
<feature type="sequence conflict" description="In Ref. 1; AAD44760." evidence="7" ref="1">
    <original>E</original>
    <variation>K</variation>
    <location>
        <position position="1242"/>
    </location>
</feature>
<gene>
    <name type="primary">Slit3</name>
</gene>
<sequence length="1523" mass="167727">MALGRTGAGAAVRARLALGLALASILSGPPAAACPTKCTCSAASVDCHGLGLRAVPRGIPRNAERLDLDRNNITRITKMDFAGLKNLRVLHLEDNQVSIIERGAFQDLKQLERLRLNKNKLQVLPELLFQSTPKLTRLDLSENQIQGIPRKAFRGVTGVKNLQLDNNHISCIEDGAFRALRDLEILTLNNNNISRILVTSFNHMPKIRTLRLHSNHLYCDCHLAWLSDWLRQRRTIGQFTLCMAPVHLRGFSVADVQKKEYVCPGPHSEAPACNANSLSCPSACSCSNNIVDCRGKGLTEIPANLPEGIVEIRLEQNSIKSIPAGAFTQYKKLKRIDISKNQISDIAPDAFQGLKSLTSLVLYGNKITEIPKGLFDGLVSLQLLLLNANKINCLRVNTFQDLQNLNLLSLYDNKLQTISKGLFVPLQSIQTLHLAQNPFVCDCHLKWLADYLQDNPIETSGARCSSPRRLANKRISQIKSKKFRCSGSEDYRNRFSSECFMDLVCPEKCRCEGTIVDCSNQKLARIPSHLPEYTTDLRLNDNDISVLEATGIFKKLPNLRKINLSNNRIKEVREGAFDGAAGVQELMLTGNQLETMHGRMFRGLSSLKTLMLRSNLISCVSNDTFAGLSSVRLLSLYDNRITTITPGAFTTLVSLSTINLLSNPFNCNCHMAWLGRWLRKRRIVSGNPRCQKPFFLKEIPIQDVAIQDFTCDGNEESSCQLSPRCPEQCTCVETVVRCSNRGLHALPKGMPKDVTELYLEGNHLTAVPKELSAFRQLTLIDLSNNSISMLTNHTFSNMSHLSTLILSYNRLRCIPVHAFNGLRSLRVLTLHGNDISSVPEGSFNDLTSLSHLALGTNPLHCDCSLRWLSEWVKAGYKEPGIARCSSPESMADRLLLTTPTHRFQCKGPVDINIVAKCNACLSSPCKNNGTCSQDPVEQYRCTCPYSYKGKDCTVPINTCVQNPCEHGGTCHLSENLRDGFSCSCPLGFEGQRCEINPDDCEDNDCENSATCVDGINNYACLCPPNYTGELCDEVIDYCVPEMNLCQHEAKCISLDKGFRCECVPGYSGKLCETNNDDCVAHKCRHGAQCVDEVNGYTCICPQGFSGLFCEHPPPMVLLQTSPCDQYECQNGAQCIVVQQEPTCRCPPGFAGPRCEKLITVNFVGKDSYVELASAKVRPQANISLQVATDKDNGILLYKGDNDPLALELYQGHVRLVYDSLSSPPTTVYSVETVNDGQFHSVELVMLNQTLNLVVDKGAPKSLGKLQKQPAVGSNSPLYLGGIPTSTGLSALRQGADRPLGGFHGCIHEVRINNELQDFKALPPQSLGVSPGCKSCTVCRHGLCRSVEKDSVVCECHPGWTGPLCDQEARDPCLGHSCRHGTCMATGDSYVCKCAEGYGGALCDQKNDSASACSAFKCHHGQCHISDRGEPYCLCQPGFSGHHCEQENPCMGEIVREAIRRQKDYASCATASKVPIMECRGGCGSQCCQPIRSKRRKYVFQCTDGSSFVEEVERHLECGCRACS</sequence>
<organism>
    <name type="scientific">Mus musculus</name>
    <name type="common">Mouse</name>
    <dbReference type="NCBI Taxonomy" id="10090"/>
    <lineage>
        <taxon>Eukaryota</taxon>
        <taxon>Metazoa</taxon>
        <taxon>Chordata</taxon>
        <taxon>Craniata</taxon>
        <taxon>Vertebrata</taxon>
        <taxon>Euteleostomi</taxon>
        <taxon>Mammalia</taxon>
        <taxon>Eutheria</taxon>
        <taxon>Euarchontoglires</taxon>
        <taxon>Glires</taxon>
        <taxon>Rodentia</taxon>
        <taxon>Myomorpha</taxon>
        <taxon>Muroidea</taxon>
        <taxon>Muridae</taxon>
        <taxon>Murinae</taxon>
        <taxon>Mus</taxon>
        <taxon>Mus</taxon>
    </lineage>
</organism>